<evidence type="ECO:0000250" key="1">
    <source>
        <dbReference type="UniProtKB" id="Q7RTY0"/>
    </source>
</evidence>
<evidence type="ECO:0000255" key="2"/>
<evidence type="ECO:0000305" key="3"/>
<protein>
    <recommendedName>
        <fullName>Monocarboxylate transporter 13</fullName>
        <shortName>MCT 13</shortName>
    </recommendedName>
    <alternativeName>
        <fullName>Solute carrier family 16 member 13</fullName>
    </alternativeName>
</protein>
<proteinExistence type="evidence at transcript level"/>
<feature type="chain" id="PRO_0000287189" description="Monocarboxylate transporter 13">
    <location>
        <begin position="1"/>
        <end position="428"/>
    </location>
</feature>
<feature type="topological domain" description="Cytoplasmic" evidence="2">
    <location>
        <begin position="1"/>
        <end position="10"/>
    </location>
</feature>
<feature type="transmembrane region" description="Helical" evidence="2">
    <location>
        <begin position="11"/>
        <end position="31"/>
    </location>
</feature>
<feature type="transmembrane region" description="Helical" evidence="2">
    <location>
        <begin position="52"/>
        <end position="72"/>
    </location>
</feature>
<feature type="transmembrane region" description="Helical" evidence="2">
    <location>
        <begin position="81"/>
        <end position="101"/>
    </location>
</feature>
<feature type="transmembrane region" description="Helical" evidence="2">
    <location>
        <begin position="106"/>
        <end position="126"/>
    </location>
</feature>
<feature type="transmembrane region" description="Helical" evidence="2">
    <location>
        <begin position="139"/>
        <end position="159"/>
    </location>
</feature>
<feature type="transmembrane region" description="Helical" evidence="2">
    <location>
        <begin position="172"/>
        <end position="192"/>
    </location>
</feature>
<feature type="transmembrane region" description="Helical" evidence="2">
    <location>
        <begin position="221"/>
        <end position="241"/>
    </location>
</feature>
<feature type="transmembrane region" description="Helical" evidence="2">
    <location>
        <begin position="244"/>
        <end position="264"/>
    </location>
</feature>
<feature type="transmembrane region" description="Helical" evidence="2">
    <location>
        <begin position="283"/>
        <end position="303"/>
    </location>
</feature>
<feature type="transmembrane region" description="Helical" evidence="2">
    <location>
        <begin position="309"/>
        <end position="329"/>
    </location>
</feature>
<feature type="transmembrane region" description="Helical" evidence="2">
    <location>
        <begin position="338"/>
        <end position="358"/>
    </location>
</feature>
<feature type="transmembrane region" description="Helical" evidence="2">
    <location>
        <begin position="374"/>
        <end position="394"/>
    </location>
</feature>
<feature type="topological domain" description="Cytoplasmic" evidence="2">
    <location>
        <begin position="395"/>
        <end position="428"/>
    </location>
</feature>
<accession>Q66HE2</accession>
<organism>
    <name type="scientific">Rattus norvegicus</name>
    <name type="common">Rat</name>
    <dbReference type="NCBI Taxonomy" id="10116"/>
    <lineage>
        <taxon>Eukaryota</taxon>
        <taxon>Metazoa</taxon>
        <taxon>Chordata</taxon>
        <taxon>Craniata</taxon>
        <taxon>Vertebrata</taxon>
        <taxon>Euteleostomi</taxon>
        <taxon>Mammalia</taxon>
        <taxon>Eutheria</taxon>
        <taxon>Euarchontoglires</taxon>
        <taxon>Glires</taxon>
        <taxon>Rodentia</taxon>
        <taxon>Myomorpha</taxon>
        <taxon>Muroidea</taxon>
        <taxon>Muridae</taxon>
        <taxon>Murinae</taxon>
        <taxon>Rattus</taxon>
    </lineage>
</organism>
<dbReference type="EMBL" id="BC081902">
    <property type="protein sequence ID" value="AAH81902.1"/>
    <property type="molecule type" value="mRNA"/>
</dbReference>
<dbReference type="RefSeq" id="NP_001005530.1">
    <property type="nucleotide sequence ID" value="NM_001005530.1"/>
</dbReference>
<dbReference type="RefSeq" id="XP_038941401.1">
    <property type="nucleotide sequence ID" value="XM_039085473.2"/>
</dbReference>
<dbReference type="RefSeq" id="XP_063124724.1">
    <property type="nucleotide sequence ID" value="XM_063268654.1"/>
</dbReference>
<dbReference type="RefSeq" id="XP_063124725.1">
    <property type="nucleotide sequence ID" value="XM_063268655.1"/>
</dbReference>
<dbReference type="SMR" id="Q66HE2"/>
<dbReference type="FunCoup" id="Q66HE2">
    <property type="interactions" value="79"/>
</dbReference>
<dbReference type="STRING" id="10116.ENSRNOP00000025403"/>
<dbReference type="PhosphoSitePlus" id="Q66HE2"/>
<dbReference type="PaxDb" id="10116-ENSRNOP00000025403"/>
<dbReference type="Ensembl" id="ENSRNOT00000025403.5">
    <property type="protein sequence ID" value="ENSRNOP00000025403.4"/>
    <property type="gene ID" value="ENSRNOG00000018785.7"/>
</dbReference>
<dbReference type="GeneID" id="287451"/>
<dbReference type="KEGG" id="rno:287451"/>
<dbReference type="UCSC" id="RGD:1359138">
    <property type="organism name" value="rat"/>
</dbReference>
<dbReference type="AGR" id="RGD:1359138"/>
<dbReference type="CTD" id="201232"/>
<dbReference type="RGD" id="1359138">
    <property type="gene designation" value="Slc16a13"/>
</dbReference>
<dbReference type="eggNOG" id="KOG2504">
    <property type="taxonomic scope" value="Eukaryota"/>
</dbReference>
<dbReference type="GeneTree" id="ENSGT00940000159372"/>
<dbReference type="HOGENOM" id="CLU_001265_59_1_1"/>
<dbReference type="InParanoid" id="Q66HE2"/>
<dbReference type="OMA" id="DLVWQIS"/>
<dbReference type="OrthoDB" id="2213137at2759"/>
<dbReference type="PhylomeDB" id="Q66HE2"/>
<dbReference type="TreeFam" id="TF313792"/>
<dbReference type="PRO" id="PR:Q66HE2"/>
<dbReference type="Proteomes" id="UP000002494">
    <property type="component" value="Chromosome 10"/>
</dbReference>
<dbReference type="Bgee" id="ENSRNOG00000018785">
    <property type="expression patterns" value="Expressed in adult mammalian kidney and 18 other cell types or tissues"/>
</dbReference>
<dbReference type="GO" id="GO:0005794">
    <property type="term" value="C:Golgi apparatus"/>
    <property type="evidence" value="ECO:0000250"/>
    <property type="project" value="UniProtKB"/>
</dbReference>
<dbReference type="GO" id="GO:0000139">
    <property type="term" value="C:Golgi membrane"/>
    <property type="evidence" value="ECO:0007669"/>
    <property type="project" value="UniProtKB-SubCell"/>
</dbReference>
<dbReference type="GO" id="GO:0005886">
    <property type="term" value="C:plasma membrane"/>
    <property type="evidence" value="ECO:0000318"/>
    <property type="project" value="GO_Central"/>
</dbReference>
<dbReference type="GO" id="GO:0008028">
    <property type="term" value="F:monocarboxylic acid transmembrane transporter activity"/>
    <property type="evidence" value="ECO:0000318"/>
    <property type="project" value="GO_Central"/>
</dbReference>
<dbReference type="GO" id="GO:0015293">
    <property type="term" value="F:symporter activity"/>
    <property type="evidence" value="ECO:0007669"/>
    <property type="project" value="UniProtKB-KW"/>
</dbReference>
<dbReference type="CDD" id="cd17423">
    <property type="entry name" value="MFS_MCT11_13"/>
    <property type="match status" value="1"/>
</dbReference>
<dbReference type="FunFam" id="1.20.1250.20:FF:000163">
    <property type="entry name" value="Putative monocarboxylate transporter 13"/>
    <property type="match status" value="1"/>
</dbReference>
<dbReference type="Gene3D" id="1.20.1250.20">
    <property type="entry name" value="MFS general substrate transporter like domains"/>
    <property type="match status" value="1"/>
</dbReference>
<dbReference type="InterPro" id="IPR011701">
    <property type="entry name" value="MFS"/>
</dbReference>
<dbReference type="InterPro" id="IPR020846">
    <property type="entry name" value="MFS_dom"/>
</dbReference>
<dbReference type="InterPro" id="IPR048233">
    <property type="entry name" value="MFS_MCT_13"/>
</dbReference>
<dbReference type="InterPro" id="IPR036259">
    <property type="entry name" value="MFS_trans_sf"/>
</dbReference>
<dbReference type="InterPro" id="IPR050327">
    <property type="entry name" value="Proton-linked_MCT"/>
</dbReference>
<dbReference type="PANTHER" id="PTHR11360">
    <property type="entry name" value="MONOCARBOXYLATE TRANSPORTER"/>
    <property type="match status" value="1"/>
</dbReference>
<dbReference type="PANTHER" id="PTHR11360:SF19">
    <property type="entry name" value="MONOCARBOXYLATE TRANSPORTER 13"/>
    <property type="match status" value="1"/>
</dbReference>
<dbReference type="Pfam" id="PF07690">
    <property type="entry name" value="MFS_1"/>
    <property type="match status" value="1"/>
</dbReference>
<dbReference type="SUPFAM" id="SSF103473">
    <property type="entry name" value="MFS general substrate transporter"/>
    <property type="match status" value="1"/>
</dbReference>
<dbReference type="PROSITE" id="PS50850">
    <property type="entry name" value="MFS"/>
    <property type="match status" value="1"/>
</dbReference>
<comment type="function">
    <text evidence="1">Proton-linked monocarboxylate transporter. May catalyze the transport of monocarboxylates across the plasma membrane.</text>
</comment>
<comment type="subcellular location">
    <subcellularLocation>
        <location evidence="1">Golgi apparatus membrane</location>
        <topology evidence="1">Multi-pass membrane protein</topology>
    </subcellularLocation>
    <subcellularLocation>
        <location evidence="2">Cell membrane</location>
        <topology evidence="2">Multi-pass membrane protein</topology>
    </subcellularLocation>
</comment>
<comment type="similarity">
    <text evidence="3">Belongs to the major facilitator superfamily. Monocarboxylate porter (TC 2.A.1.13) family.</text>
</comment>
<keyword id="KW-1003">Cell membrane</keyword>
<keyword id="KW-0333">Golgi apparatus</keyword>
<keyword id="KW-0472">Membrane</keyword>
<keyword id="KW-1185">Reference proteome</keyword>
<keyword id="KW-0769">Symport</keyword>
<keyword id="KW-0812">Transmembrane</keyword>
<keyword id="KW-1133">Transmembrane helix</keyword>
<keyword id="KW-0813">Transport</keyword>
<name>MOT13_RAT</name>
<sequence length="428" mass="44993">MVHRTEPPDGGWGWMVVLSAFFQSALVFGVLRSFGVFFVEFVAAFEEQAARVSWIASIGIAVQQFGSPIGSALSTKLGPRPVVMTGGILAALGMLLASFATSLTHLYLSIGLLSGSGWALTFTPTLACLSRYFSQRRSLAMGLALTGVGISSFAFAPLFQWLLNNYAWRGALLLVSALSLHLVACGALLRPLSLTEDTAVGGPWAQITSLLCHGPFLRYTVALTLINTGYFIPYVHLVAHLQDLGWDPLPAAFLLSVAAISDLVGRVASGWLGDAVPGPVARLLMLWTTLTGVSLALFPVAQASTTLVVLAVAYGFTSGALTPVAFSVIPELVGTGRIYCGLGLVQMIESVGGLLGAPLSGYLRDVTGNYTASFVVAGAFLLAGSGVLITLPHFFSCISLSTSRPQDLVIEAPDTKIPLPKEEGLGEN</sequence>
<reference key="1">
    <citation type="journal article" date="2004" name="Genome Res.">
        <title>The status, quality, and expansion of the NIH full-length cDNA project: the Mammalian Gene Collection (MGC).</title>
        <authorList>
            <consortium name="The MGC Project Team"/>
        </authorList>
    </citation>
    <scope>NUCLEOTIDE SEQUENCE [LARGE SCALE MRNA]</scope>
    <source>
        <tissue>Kidney</tissue>
    </source>
</reference>
<gene>
    <name type="primary">Slc16a13</name>
    <name type="synonym">Mct13</name>
</gene>